<gene>
    <name evidence="1" type="primary">hmgA</name>
    <name type="ordered locus">NGR_c29980</name>
</gene>
<comment type="function">
    <text evidence="1">Involved in the catabolism of homogentisate (2,5-dihydroxyphenylacetate or 2,5-OH-PhAc), a central intermediate in the degradation of phenylalanine and tyrosine. Catalyzes the oxidative ring cleavage of the aromatic ring of homogentisate to yield maleylacetoacetate.</text>
</comment>
<comment type="catalytic activity">
    <reaction evidence="1">
        <text>homogentisate + O2 = 4-maleylacetoacetate + H(+)</text>
        <dbReference type="Rhea" id="RHEA:15449"/>
        <dbReference type="ChEBI" id="CHEBI:15378"/>
        <dbReference type="ChEBI" id="CHEBI:15379"/>
        <dbReference type="ChEBI" id="CHEBI:16169"/>
        <dbReference type="ChEBI" id="CHEBI:17105"/>
        <dbReference type="EC" id="1.13.11.5"/>
    </reaction>
</comment>
<comment type="cofactor">
    <cofactor evidence="1">
        <name>Fe cation</name>
        <dbReference type="ChEBI" id="CHEBI:24875"/>
    </cofactor>
</comment>
<comment type="pathway">
    <text evidence="1">Amino-acid degradation; L-phenylalanine degradation; acetoacetate and fumarate from L-phenylalanine: step 4/6.</text>
</comment>
<comment type="subunit">
    <text evidence="1">Hexamer; dimer of trimers.</text>
</comment>
<comment type="similarity">
    <text evidence="1">Belongs to the homogentisate dioxygenase family.</text>
</comment>
<proteinExistence type="inferred from homology"/>
<feature type="chain" id="PRO_1000190375" description="Homogentisate 1,2-dioxygenase">
    <location>
        <begin position="1"/>
        <end position="453"/>
    </location>
</feature>
<feature type="active site" description="Proton acceptor" evidence="1">
    <location>
        <position position="304"/>
    </location>
</feature>
<feature type="binding site" evidence="1">
    <location>
        <position position="347"/>
    </location>
    <ligand>
        <name>Fe cation</name>
        <dbReference type="ChEBI" id="CHEBI:24875"/>
    </ligand>
</feature>
<feature type="binding site" evidence="1">
    <location>
        <position position="353"/>
    </location>
    <ligand>
        <name>Fe cation</name>
        <dbReference type="ChEBI" id="CHEBI:24875"/>
    </ligand>
</feature>
<feature type="binding site" evidence="1">
    <location>
        <position position="362"/>
    </location>
    <ligand>
        <name>homogentisate</name>
        <dbReference type="ChEBI" id="CHEBI:16169"/>
    </ligand>
</feature>
<feature type="binding site" evidence="1">
    <location>
        <position position="383"/>
    </location>
    <ligand>
        <name>Fe cation</name>
        <dbReference type="ChEBI" id="CHEBI:24875"/>
    </ligand>
</feature>
<feature type="binding site" evidence="1">
    <location>
        <position position="383"/>
    </location>
    <ligand>
        <name>homogentisate</name>
        <dbReference type="ChEBI" id="CHEBI:16169"/>
    </ligand>
</feature>
<accession>C3M930</accession>
<keyword id="KW-0223">Dioxygenase</keyword>
<keyword id="KW-0408">Iron</keyword>
<keyword id="KW-0479">Metal-binding</keyword>
<keyword id="KW-0560">Oxidoreductase</keyword>
<keyword id="KW-0585">Phenylalanine catabolism</keyword>
<keyword id="KW-1185">Reference proteome</keyword>
<keyword id="KW-0828">Tyrosine catabolism</keyword>
<organism>
    <name type="scientific">Sinorhizobium fredii (strain NBRC 101917 / NGR234)</name>
    <dbReference type="NCBI Taxonomy" id="394"/>
    <lineage>
        <taxon>Bacteria</taxon>
        <taxon>Pseudomonadati</taxon>
        <taxon>Pseudomonadota</taxon>
        <taxon>Alphaproteobacteria</taxon>
        <taxon>Hyphomicrobiales</taxon>
        <taxon>Rhizobiaceae</taxon>
        <taxon>Sinorhizobium/Ensifer group</taxon>
        <taxon>Sinorhizobium</taxon>
    </lineage>
</organism>
<name>HGD_SINFN</name>
<dbReference type="EC" id="1.13.11.5" evidence="1"/>
<dbReference type="EMBL" id="CP001389">
    <property type="protein sequence ID" value="ACP26741.1"/>
    <property type="molecule type" value="Genomic_DNA"/>
</dbReference>
<dbReference type="RefSeq" id="WP_012709494.1">
    <property type="nucleotide sequence ID" value="NC_012587.1"/>
</dbReference>
<dbReference type="RefSeq" id="YP_002827494.1">
    <property type="nucleotide sequence ID" value="NC_012587.1"/>
</dbReference>
<dbReference type="SMR" id="C3M930"/>
<dbReference type="STRING" id="394.NGR_c29980"/>
<dbReference type="KEGG" id="rhi:NGR_c29980"/>
<dbReference type="PATRIC" id="fig|394.7.peg.5838"/>
<dbReference type="eggNOG" id="COG3508">
    <property type="taxonomic scope" value="Bacteria"/>
</dbReference>
<dbReference type="HOGENOM" id="CLU_027174_0_0_5"/>
<dbReference type="OrthoDB" id="9811253at2"/>
<dbReference type="UniPathway" id="UPA00139">
    <property type="reaction ID" value="UER00339"/>
</dbReference>
<dbReference type="Proteomes" id="UP000001054">
    <property type="component" value="Chromosome"/>
</dbReference>
<dbReference type="GO" id="GO:0005737">
    <property type="term" value="C:cytoplasm"/>
    <property type="evidence" value="ECO:0007669"/>
    <property type="project" value="TreeGrafter"/>
</dbReference>
<dbReference type="GO" id="GO:0004411">
    <property type="term" value="F:homogentisate 1,2-dioxygenase activity"/>
    <property type="evidence" value="ECO:0007669"/>
    <property type="project" value="UniProtKB-UniRule"/>
</dbReference>
<dbReference type="GO" id="GO:0005506">
    <property type="term" value="F:iron ion binding"/>
    <property type="evidence" value="ECO:0007669"/>
    <property type="project" value="UniProtKB-UniRule"/>
</dbReference>
<dbReference type="GO" id="GO:0006559">
    <property type="term" value="P:L-phenylalanine catabolic process"/>
    <property type="evidence" value="ECO:0007669"/>
    <property type="project" value="UniProtKB-UniRule"/>
</dbReference>
<dbReference type="GO" id="GO:0006572">
    <property type="term" value="P:tyrosine catabolic process"/>
    <property type="evidence" value="ECO:0007669"/>
    <property type="project" value="UniProtKB-UniRule"/>
</dbReference>
<dbReference type="CDD" id="cd07000">
    <property type="entry name" value="cupin_HGO_N"/>
    <property type="match status" value="1"/>
</dbReference>
<dbReference type="FunFam" id="2.60.120.10:FF:000034">
    <property type="entry name" value="Homogentisate 1,2-dioxygenase"/>
    <property type="match status" value="1"/>
</dbReference>
<dbReference type="Gene3D" id="2.60.120.10">
    <property type="entry name" value="Jelly Rolls"/>
    <property type="match status" value="1"/>
</dbReference>
<dbReference type="HAMAP" id="MF_00334">
    <property type="entry name" value="Homogentis_dioxygen"/>
    <property type="match status" value="1"/>
</dbReference>
<dbReference type="InterPro" id="IPR046451">
    <property type="entry name" value="HgmA_C"/>
</dbReference>
<dbReference type="InterPro" id="IPR046452">
    <property type="entry name" value="HgmA_N"/>
</dbReference>
<dbReference type="InterPro" id="IPR005708">
    <property type="entry name" value="Homogentis_dOase"/>
</dbReference>
<dbReference type="InterPro" id="IPR022950">
    <property type="entry name" value="Homogentis_dOase_bac"/>
</dbReference>
<dbReference type="InterPro" id="IPR014710">
    <property type="entry name" value="RmlC-like_jellyroll"/>
</dbReference>
<dbReference type="InterPro" id="IPR011051">
    <property type="entry name" value="RmlC_Cupin_sf"/>
</dbReference>
<dbReference type="NCBIfam" id="TIGR01015">
    <property type="entry name" value="hmgA"/>
    <property type="match status" value="1"/>
</dbReference>
<dbReference type="PANTHER" id="PTHR11056">
    <property type="entry name" value="HOMOGENTISATE 1,2-DIOXYGENASE"/>
    <property type="match status" value="1"/>
</dbReference>
<dbReference type="PANTHER" id="PTHR11056:SF0">
    <property type="entry name" value="HOMOGENTISATE 1,2-DIOXYGENASE"/>
    <property type="match status" value="1"/>
</dbReference>
<dbReference type="Pfam" id="PF04209">
    <property type="entry name" value="HgmA_C"/>
    <property type="match status" value="1"/>
</dbReference>
<dbReference type="Pfam" id="PF20510">
    <property type="entry name" value="HgmA_N"/>
    <property type="match status" value="1"/>
</dbReference>
<dbReference type="SUPFAM" id="SSF51182">
    <property type="entry name" value="RmlC-like cupins"/>
    <property type="match status" value="1"/>
</dbReference>
<protein>
    <recommendedName>
        <fullName evidence="1">Homogentisate 1,2-dioxygenase</fullName>
        <shortName evidence="1">HGDO</shortName>
        <ecNumber evidence="1">1.13.11.5</ecNumber>
    </recommendedName>
    <alternativeName>
        <fullName evidence="1">Homogentisate oxygenase</fullName>
    </alternativeName>
    <alternativeName>
        <fullName evidence="1">Homogentisic acid oxidase</fullName>
    </alternativeName>
    <alternativeName>
        <fullName evidence="1">Homogentisicase</fullName>
    </alternativeName>
</protein>
<sequence>MLGKAEKRSEALAAEALAYMPGFGNDFETESLPGALPQGQNSPQKCNYGLYAEQLSGSPFTAPRGTNERSWLYRIRPSVRHTGRFAKIDYPHWKTAPHIAEHALALGQLRWNPLPEPTGELNFLQGIRTMTTAGDVLTQVGMAAHAYVFNADMVDDYFFNADGELLIVPEMGALQVFTELGKMDVAPSEICLVPRGTMFKVARLGEEKAWRGYICENYGAKFTLPDRGPIGANCLANPRDFKTPVAAFEDKETPCRVQVKWCGSFHTVEIGHSPLDVVAWHGNYAPYKYDLKTFSPVGAILFDHPDPSIFTVLTAPSGEEGTANVDFVLFPPRWLVAEHTFRPPWYHRNIMSEFMGLIHGRYDAKEEGFVPGGMSLHNMMLAHGPDTSGFEKATNGELKPVKLDNTMAFMFETRFPQQLTRFAAELETLQDDYIDCWAGLRKRFNGTPEGDWS</sequence>
<reference key="1">
    <citation type="journal article" date="2009" name="Appl. Environ. Microbiol.">
        <title>Rhizobium sp. strain NGR234 possesses a remarkable number of secretion systems.</title>
        <authorList>
            <person name="Schmeisser C."/>
            <person name="Liesegang H."/>
            <person name="Krysciak D."/>
            <person name="Bakkou N."/>
            <person name="Le Quere A."/>
            <person name="Wollherr A."/>
            <person name="Heinemeyer I."/>
            <person name="Morgenstern B."/>
            <person name="Pommerening-Roeser A."/>
            <person name="Flores M."/>
            <person name="Palacios R."/>
            <person name="Brenner S."/>
            <person name="Gottschalk G."/>
            <person name="Schmitz R.A."/>
            <person name="Broughton W.J."/>
            <person name="Perret X."/>
            <person name="Strittmatter A.W."/>
            <person name="Streit W.R."/>
        </authorList>
    </citation>
    <scope>NUCLEOTIDE SEQUENCE [LARGE SCALE GENOMIC DNA]</scope>
    <source>
        <strain>NBRC 101917 / NGR234</strain>
    </source>
</reference>
<evidence type="ECO:0000255" key="1">
    <source>
        <dbReference type="HAMAP-Rule" id="MF_00334"/>
    </source>
</evidence>